<sequence length="289" mass="31548">MKIIVPATSANIGPGFDSVGVAVTKYLQIEVCEERDEWLIEHQIGKWIPHDERNLLLKIALQIVPDLQPRRLKMTSDVPLARGLGSSSSVIVAGIELANQLGQLNLSDHEKLQLATKIEGHPDNVAPAIYGNLVIASSVEGQVSAIVADFPECDFLAYIPNYELRTRDSRSVLPKKLSYKEAVAASSIANVAVAALLAGDMVTAGQAIEGDLFHERYRQDLVREFAMIKQVTKENGAYATYLSGAGPTVMVLASHDKMPTIKAELEKQPFKGKLHDLRVDTQGVRVEAK</sequence>
<name>KHSE_STRPJ</name>
<comment type="function">
    <text evidence="1">Catalyzes the ATP-dependent phosphorylation of L-homoserine to L-homoserine phosphate.</text>
</comment>
<comment type="catalytic activity">
    <reaction evidence="1">
        <text>L-homoserine + ATP = O-phospho-L-homoserine + ADP + H(+)</text>
        <dbReference type="Rhea" id="RHEA:13985"/>
        <dbReference type="ChEBI" id="CHEBI:15378"/>
        <dbReference type="ChEBI" id="CHEBI:30616"/>
        <dbReference type="ChEBI" id="CHEBI:57476"/>
        <dbReference type="ChEBI" id="CHEBI:57590"/>
        <dbReference type="ChEBI" id="CHEBI:456216"/>
        <dbReference type="EC" id="2.7.1.39"/>
    </reaction>
</comment>
<comment type="pathway">
    <text evidence="1">Amino-acid biosynthesis; L-threonine biosynthesis; L-threonine from L-aspartate: step 4/5.</text>
</comment>
<comment type="subcellular location">
    <subcellularLocation>
        <location evidence="1">Cytoplasm</location>
    </subcellularLocation>
</comment>
<comment type="similarity">
    <text evidence="1">Belongs to the GHMP kinase family. Homoserine kinase subfamily.</text>
</comment>
<reference key="1">
    <citation type="journal article" date="2009" name="J. Bacteriol.">
        <title>Role of conjugative elements in the evolution of the multidrug-resistant pandemic clone Streptococcus pneumoniae Spain23F ST81.</title>
        <authorList>
            <person name="Croucher N.J."/>
            <person name="Walker D."/>
            <person name="Romero P."/>
            <person name="Lennard N."/>
            <person name="Paterson G.K."/>
            <person name="Bason N.C."/>
            <person name="Mitchell A.M."/>
            <person name="Quail M.A."/>
            <person name="Andrew P.W."/>
            <person name="Parkhill J."/>
            <person name="Bentley S.D."/>
            <person name="Mitchell T.J."/>
        </authorList>
    </citation>
    <scope>NUCLEOTIDE SEQUENCE [LARGE SCALE GENOMIC DNA]</scope>
    <source>
        <strain>ATCC 700669 / Spain 23F-1</strain>
    </source>
</reference>
<protein>
    <recommendedName>
        <fullName evidence="1">Homoserine kinase</fullName>
        <shortName evidence="1">HK</shortName>
        <shortName evidence="1">HSK</shortName>
        <ecNumber evidence="1">2.7.1.39</ecNumber>
    </recommendedName>
</protein>
<feature type="chain" id="PRO_1000134263" description="Homoserine kinase">
    <location>
        <begin position="1"/>
        <end position="289"/>
    </location>
</feature>
<feature type="binding site" evidence="1">
    <location>
        <begin position="79"/>
        <end position="89"/>
    </location>
    <ligand>
        <name>ATP</name>
        <dbReference type="ChEBI" id="CHEBI:30616"/>
    </ligand>
</feature>
<evidence type="ECO:0000255" key="1">
    <source>
        <dbReference type="HAMAP-Rule" id="MF_00384"/>
    </source>
</evidence>
<dbReference type="EC" id="2.7.1.39" evidence="1"/>
<dbReference type="EMBL" id="FM211187">
    <property type="protein sequence ID" value="CAR69126.1"/>
    <property type="molecule type" value="Genomic_DNA"/>
</dbReference>
<dbReference type="RefSeq" id="WP_000692438.1">
    <property type="nucleotide sequence ID" value="NC_011900.1"/>
</dbReference>
<dbReference type="SMR" id="B8ZKK9"/>
<dbReference type="GeneID" id="45653380"/>
<dbReference type="KEGG" id="sne:SPN23F13260"/>
<dbReference type="HOGENOM" id="CLU_041243_0_0_9"/>
<dbReference type="UniPathway" id="UPA00050">
    <property type="reaction ID" value="UER00064"/>
</dbReference>
<dbReference type="GO" id="GO:0005737">
    <property type="term" value="C:cytoplasm"/>
    <property type="evidence" value="ECO:0007669"/>
    <property type="project" value="UniProtKB-SubCell"/>
</dbReference>
<dbReference type="GO" id="GO:0005524">
    <property type="term" value="F:ATP binding"/>
    <property type="evidence" value="ECO:0007669"/>
    <property type="project" value="UniProtKB-UniRule"/>
</dbReference>
<dbReference type="GO" id="GO:0004413">
    <property type="term" value="F:homoserine kinase activity"/>
    <property type="evidence" value="ECO:0007669"/>
    <property type="project" value="UniProtKB-UniRule"/>
</dbReference>
<dbReference type="GO" id="GO:0009088">
    <property type="term" value="P:threonine biosynthetic process"/>
    <property type="evidence" value="ECO:0007669"/>
    <property type="project" value="UniProtKB-UniRule"/>
</dbReference>
<dbReference type="Gene3D" id="3.30.230.10">
    <property type="match status" value="1"/>
</dbReference>
<dbReference type="Gene3D" id="3.30.70.890">
    <property type="entry name" value="GHMP kinase, C-terminal domain"/>
    <property type="match status" value="1"/>
</dbReference>
<dbReference type="HAMAP" id="MF_00384">
    <property type="entry name" value="Homoser_kinase"/>
    <property type="match status" value="1"/>
</dbReference>
<dbReference type="InterPro" id="IPR013750">
    <property type="entry name" value="GHMP_kinase_C_dom"/>
</dbReference>
<dbReference type="InterPro" id="IPR036554">
    <property type="entry name" value="GHMP_kinase_C_sf"/>
</dbReference>
<dbReference type="InterPro" id="IPR006204">
    <property type="entry name" value="GHMP_kinase_N_dom"/>
</dbReference>
<dbReference type="InterPro" id="IPR006203">
    <property type="entry name" value="GHMP_knse_ATP-bd_CS"/>
</dbReference>
<dbReference type="InterPro" id="IPR000870">
    <property type="entry name" value="Homoserine_kinase"/>
</dbReference>
<dbReference type="InterPro" id="IPR020568">
    <property type="entry name" value="Ribosomal_Su5_D2-typ_SF"/>
</dbReference>
<dbReference type="InterPro" id="IPR014721">
    <property type="entry name" value="Ribsml_uS5_D2-typ_fold_subgr"/>
</dbReference>
<dbReference type="NCBIfam" id="TIGR00191">
    <property type="entry name" value="thrB"/>
    <property type="match status" value="1"/>
</dbReference>
<dbReference type="PANTHER" id="PTHR20861:SF1">
    <property type="entry name" value="HOMOSERINE KINASE"/>
    <property type="match status" value="1"/>
</dbReference>
<dbReference type="PANTHER" id="PTHR20861">
    <property type="entry name" value="HOMOSERINE/4-DIPHOSPHOCYTIDYL-2-C-METHYL-D-ERYTHRITOL KINASE"/>
    <property type="match status" value="1"/>
</dbReference>
<dbReference type="Pfam" id="PF08544">
    <property type="entry name" value="GHMP_kinases_C"/>
    <property type="match status" value="1"/>
</dbReference>
<dbReference type="Pfam" id="PF00288">
    <property type="entry name" value="GHMP_kinases_N"/>
    <property type="match status" value="1"/>
</dbReference>
<dbReference type="PIRSF" id="PIRSF000676">
    <property type="entry name" value="Homoser_kin"/>
    <property type="match status" value="1"/>
</dbReference>
<dbReference type="PRINTS" id="PR00958">
    <property type="entry name" value="HOMSERKINASE"/>
</dbReference>
<dbReference type="SUPFAM" id="SSF55060">
    <property type="entry name" value="GHMP Kinase, C-terminal domain"/>
    <property type="match status" value="1"/>
</dbReference>
<dbReference type="SUPFAM" id="SSF54211">
    <property type="entry name" value="Ribosomal protein S5 domain 2-like"/>
    <property type="match status" value="1"/>
</dbReference>
<dbReference type="PROSITE" id="PS00627">
    <property type="entry name" value="GHMP_KINASES_ATP"/>
    <property type="match status" value="1"/>
</dbReference>
<gene>
    <name evidence="1" type="primary">thrB</name>
    <name type="ordered locus">SPN23F13260</name>
</gene>
<keyword id="KW-0028">Amino-acid biosynthesis</keyword>
<keyword id="KW-0067">ATP-binding</keyword>
<keyword id="KW-0963">Cytoplasm</keyword>
<keyword id="KW-0418">Kinase</keyword>
<keyword id="KW-0547">Nucleotide-binding</keyword>
<keyword id="KW-0791">Threonine biosynthesis</keyword>
<keyword id="KW-0808">Transferase</keyword>
<accession>B8ZKK9</accession>
<proteinExistence type="inferred from homology"/>
<organism>
    <name type="scientific">Streptococcus pneumoniae (strain ATCC 700669 / Spain 23F-1)</name>
    <dbReference type="NCBI Taxonomy" id="561276"/>
    <lineage>
        <taxon>Bacteria</taxon>
        <taxon>Bacillati</taxon>
        <taxon>Bacillota</taxon>
        <taxon>Bacilli</taxon>
        <taxon>Lactobacillales</taxon>
        <taxon>Streptococcaceae</taxon>
        <taxon>Streptococcus</taxon>
    </lineage>
</organism>